<sequence length="176" mass="19151">MDLPGPIHDFLLVFLGSGIILGGLGVVLLTNPIFSAFSLGLVLFCISLFHIPSNSHFVAAAQLLIYVGAINVLIIFAVMFTNGSEYYNDFHVWTVGDGVTSLVCTSIFVSLITTILDTSWYGIIWTTRSNQIIEQDLISNGQQIGIHLSTDFFLPFELVSIILLVALIGAIAMARQ</sequence>
<comment type="function">
    <text evidence="1">NDH shuttles electrons from NAD(P)H:plastoquinone, via FMN and iron-sulfur (Fe-S) centers, to quinones in the photosynthetic chain and possibly in a chloroplast respiratory chain. The immediate electron acceptor for the enzyme in this species is believed to be plastoquinone. Couples the redox reaction to proton translocation, and thus conserves the redox energy in a proton gradient (By similarity).</text>
</comment>
<comment type="catalytic activity">
    <reaction>
        <text>a plastoquinone + NADH + (n+1) H(+)(in) = a plastoquinol + NAD(+) + n H(+)(out)</text>
        <dbReference type="Rhea" id="RHEA:42608"/>
        <dbReference type="Rhea" id="RHEA-COMP:9561"/>
        <dbReference type="Rhea" id="RHEA-COMP:9562"/>
        <dbReference type="ChEBI" id="CHEBI:15378"/>
        <dbReference type="ChEBI" id="CHEBI:17757"/>
        <dbReference type="ChEBI" id="CHEBI:57540"/>
        <dbReference type="ChEBI" id="CHEBI:57945"/>
        <dbReference type="ChEBI" id="CHEBI:62192"/>
    </reaction>
</comment>
<comment type="catalytic activity">
    <reaction>
        <text>a plastoquinone + NADPH + (n+1) H(+)(in) = a plastoquinol + NADP(+) + n H(+)(out)</text>
        <dbReference type="Rhea" id="RHEA:42612"/>
        <dbReference type="Rhea" id="RHEA-COMP:9561"/>
        <dbReference type="Rhea" id="RHEA-COMP:9562"/>
        <dbReference type="ChEBI" id="CHEBI:15378"/>
        <dbReference type="ChEBI" id="CHEBI:17757"/>
        <dbReference type="ChEBI" id="CHEBI:57783"/>
        <dbReference type="ChEBI" id="CHEBI:58349"/>
        <dbReference type="ChEBI" id="CHEBI:62192"/>
    </reaction>
</comment>
<comment type="subunit">
    <text evidence="1">NDH is composed of at least 16 different subunits, 5 of which are encoded in the nucleus.</text>
</comment>
<comment type="subcellular location">
    <subcellularLocation>
        <location evidence="1">Plastid</location>
        <location evidence="1">Chloroplast thylakoid membrane</location>
        <topology evidence="1">Multi-pass membrane protein</topology>
    </subcellularLocation>
</comment>
<comment type="similarity">
    <text evidence="3">Belongs to the complex I subunit 6 family.</text>
</comment>
<protein>
    <recommendedName>
        <fullName>NAD(P)H-quinone oxidoreductase subunit 6, chloroplastic</fullName>
        <ecNumber>7.1.1.-</ecNumber>
    </recommendedName>
    <alternativeName>
        <fullName>NAD(P)H dehydrogenase subunit 6</fullName>
    </alternativeName>
    <alternativeName>
        <fullName>NADH-plastoquinone oxidoreductase subunit 6</fullName>
    </alternativeName>
</protein>
<proteinExistence type="inferred from homology"/>
<dbReference type="EC" id="7.1.1.-"/>
<dbReference type="EMBL" id="EF380351">
    <property type="protein sequence ID" value="ABQ45303.1"/>
    <property type="molecule type" value="Genomic_DNA"/>
</dbReference>
<dbReference type="RefSeq" id="YP_001294238.1">
    <property type="nucleotide sequence ID" value="NC_009599.1"/>
</dbReference>
<dbReference type="SMR" id="A6MM90"/>
<dbReference type="GeneID" id="5236913"/>
<dbReference type="GO" id="GO:0009535">
    <property type="term" value="C:chloroplast thylakoid membrane"/>
    <property type="evidence" value="ECO:0007669"/>
    <property type="project" value="UniProtKB-SubCell"/>
</dbReference>
<dbReference type="GO" id="GO:0008137">
    <property type="term" value="F:NADH dehydrogenase (ubiquinone) activity"/>
    <property type="evidence" value="ECO:0007669"/>
    <property type="project" value="InterPro"/>
</dbReference>
<dbReference type="GO" id="GO:0048038">
    <property type="term" value="F:quinone binding"/>
    <property type="evidence" value="ECO:0007669"/>
    <property type="project" value="UniProtKB-KW"/>
</dbReference>
<dbReference type="FunFam" id="1.20.120.1200:FF:000002">
    <property type="entry name" value="NAD(P)H-quinone oxidoreductase subunit 6, chloroplastic"/>
    <property type="match status" value="1"/>
</dbReference>
<dbReference type="Gene3D" id="1.20.120.1200">
    <property type="entry name" value="NADH-ubiquinone/plastoquinone oxidoreductase chain 6, subunit NuoJ"/>
    <property type="match status" value="1"/>
</dbReference>
<dbReference type="InterPro" id="IPR050290">
    <property type="entry name" value="NAD(P)H-Q_Oxidoreduct_6"/>
</dbReference>
<dbReference type="InterPro" id="IPR001457">
    <property type="entry name" value="NADH_UbQ/plastoQ_OxRdtase_su6"/>
</dbReference>
<dbReference type="InterPro" id="IPR042106">
    <property type="entry name" value="Nuo/plastoQ_OxRdtase_6_NuoJ"/>
</dbReference>
<dbReference type="PANTHER" id="PTHR48479">
    <property type="entry name" value="NAD(P)H-QUINONE OXIDOREDUCTASE SUBUNIT 6, CHLOROPLASTIC"/>
    <property type="match status" value="1"/>
</dbReference>
<dbReference type="PANTHER" id="PTHR48479:SF1">
    <property type="entry name" value="NAD(P)H-QUINONE OXIDOREDUCTASE SUBUNIT 6, CHLOROPLASTIC"/>
    <property type="match status" value="1"/>
</dbReference>
<dbReference type="Pfam" id="PF00499">
    <property type="entry name" value="Oxidored_q3"/>
    <property type="match status" value="1"/>
</dbReference>
<organism>
    <name type="scientific">Buxus microphylla</name>
    <name type="common">Littleleaf boxwood</name>
    <name type="synonym">Japanese boxwood</name>
    <dbReference type="NCBI Taxonomy" id="153571"/>
    <lineage>
        <taxon>Eukaryota</taxon>
        <taxon>Viridiplantae</taxon>
        <taxon>Streptophyta</taxon>
        <taxon>Embryophyta</taxon>
        <taxon>Tracheophyta</taxon>
        <taxon>Spermatophyta</taxon>
        <taxon>Magnoliopsida</taxon>
        <taxon>Buxales</taxon>
        <taxon>Buxaceae</taxon>
        <taxon>Buxus</taxon>
    </lineage>
</organism>
<accession>A6MM90</accession>
<gene>
    <name type="primary">ndhG</name>
</gene>
<reference key="1">
    <citation type="journal article" date="2007" name="Mol. Phylogenet. Evol.">
        <title>Phylogenetic and evolutionary implications of complete chloroplast genome sequences of four early-diverging angiosperms: Buxus (Buxaceae), Chloranthus (Chloranthaceae), Dioscorea (Dioscoreaceae), and Illicium (Schisandraceae).</title>
        <authorList>
            <person name="Hansen D.R."/>
            <person name="Dastidar S.G."/>
            <person name="Cai Z."/>
            <person name="Penaflor C."/>
            <person name="Kuehl J.V."/>
            <person name="Boore J.L."/>
            <person name="Jansen R.K."/>
        </authorList>
    </citation>
    <scope>NUCLEOTIDE SEQUENCE [LARGE SCALE GENOMIC DNA]</scope>
</reference>
<feature type="chain" id="PRO_0000360232" description="NAD(P)H-quinone oxidoreductase subunit 6, chloroplastic">
    <location>
        <begin position="1"/>
        <end position="176"/>
    </location>
</feature>
<feature type="transmembrane region" description="Helical" evidence="2">
    <location>
        <begin position="10"/>
        <end position="30"/>
    </location>
</feature>
<feature type="transmembrane region" description="Helical" evidence="2">
    <location>
        <begin position="32"/>
        <end position="52"/>
    </location>
</feature>
<feature type="transmembrane region" description="Helical" evidence="2">
    <location>
        <begin position="60"/>
        <end position="80"/>
    </location>
</feature>
<feature type="transmembrane region" description="Helical" evidence="2">
    <location>
        <begin position="107"/>
        <end position="127"/>
    </location>
</feature>
<feature type="transmembrane region" description="Helical" evidence="2">
    <location>
        <begin position="152"/>
        <end position="172"/>
    </location>
</feature>
<keyword id="KW-0150">Chloroplast</keyword>
<keyword id="KW-0472">Membrane</keyword>
<keyword id="KW-0520">NAD</keyword>
<keyword id="KW-0521">NADP</keyword>
<keyword id="KW-0934">Plastid</keyword>
<keyword id="KW-0618">Plastoquinone</keyword>
<keyword id="KW-0874">Quinone</keyword>
<keyword id="KW-0793">Thylakoid</keyword>
<keyword id="KW-1278">Translocase</keyword>
<keyword id="KW-0812">Transmembrane</keyword>
<keyword id="KW-1133">Transmembrane helix</keyword>
<keyword id="KW-0813">Transport</keyword>
<evidence type="ECO:0000250" key="1"/>
<evidence type="ECO:0000255" key="2"/>
<evidence type="ECO:0000305" key="3"/>
<geneLocation type="chloroplast"/>
<name>NU6C_BUXMI</name>